<proteinExistence type="evidence at protein level"/>
<dbReference type="EC" id="2.7.11.26"/>
<dbReference type="EC" id="2.7.11.1" evidence="15 17"/>
<dbReference type="EMBL" id="L40027">
    <property type="protein sequence ID" value="AAA62432.1"/>
    <property type="molecule type" value="mRNA"/>
</dbReference>
<dbReference type="EMBL" id="D63424">
    <property type="protein sequence ID" value="BAA23608.1"/>
    <property type="molecule type" value="mRNA"/>
</dbReference>
<dbReference type="EMBL" id="AC006486">
    <property type="protein sequence ID" value="AAD11986.1"/>
    <property type="molecule type" value="Genomic_DNA"/>
</dbReference>
<dbReference type="EMBL" id="BC027984">
    <property type="protein sequence ID" value="AAH27984.1"/>
    <property type="molecule type" value="mRNA"/>
</dbReference>
<dbReference type="EMBL" id="BC051865">
    <property type="protein sequence ID" value="AAH51865.1"/>
    <property type="molecule type" value="mRNA"/>
</dbReference>
<dbReference type="CCDS" id="CCDS12599.1"/>
<dbReference type="RefSeq" id="NP_063937.2">
    <property type="nucleotide sequence ID" value="NM_019884.2"/>
</dbReference>
<dbReference type="PDB" id="7SXF">
    <property type="method" value="X-ray"/>
    <property type="resolution" value="1.94 A"/>
    <property type="chains" value="A=101-444"/>
</dbReference>
<dbReference type="PDB" id="7SXG">
    <property type="method" value="X-ray"/>
    <property type="resolution" value="2.40 A"/>
    <property type="chains" value="A=103-445"/>
</dbReference>
<dbReference type="PDBsum" id="7SXF"/>
<dbReference type="PDBsum" id="7SXG"/>
<dbReference type="SMR" id="P49840"/>
<dbReference type="BioGRID" id="109186">
    <property type="interactions" value="468"/>
</dbReference>
<dbReference type="ComplexPortal" id="CPX-107">
    <property type="entry name" value="Beta-catenin destruction core complex, APC-AXIN1-GSK3A variant"/>
</dbReference>
<dbReference type="ComplexPortal" id="CPX-441">
    <property type="entry name" value="Beta-catenin destruction core complex, APC-AXIN2-GSK3A variant"/>
</dbReference>
<dbReference type="ComplexPortal" id="CPX-442">
    <property type="entry name" value="Beta-catenin destruction core complex, APC2-AXIN1-GSK3A variant"/>
</dbReference>
<dbReference type="ComplexPortal" id="CPX-443">
    <property type="entry name" value="Beta-catenin destruction core complex, APC2-AXIN2-GSK3A variant"/>
</dbReference>
<dbReference type="ELM" id="P49840"/>
<dbReference type="FunCoup" id="P49840">
    <property type="interactions" value="1731"/>
</dbReference>
<dbReference type="IntAct" id="P49840">
    <property type="interactions" value="165"/>
</dbReference>
<dbReference type="MINT" id="P49840"/>
<dbReference type="STRING" id="9606.ENSP00000222330"/>
<dbReference type="BindingDB" id="P49840"/>
<dbReference type="ChEMBL" id="CHEMBL2850"/>
<dbReference type="DrugBank" id="DB01950">
    <property type="generic name" value="AR-AO-14418"/>
</dbReference>
<dbReference type="DrugBank" id="DB12010">
    <property type="generic name" value="Fostamatinib"/>
</dbReference>
<dbReference type="DrugBank" id="DB16607">
    <property type="generic name" value="Lithium chloride"/>
</dbReference>
<dbReference type="DrugBank" id="DB11913">
    <property type="generic name" value="LY-2090314"/>
</dbReference>
<dbReference type="DrugBank" id="DB00313">
    <property type="generic name" value="Valproic acid"/>
</dbReference>
<dbReference type="DrugCentral" id="P49840"/>
<dbReference type="GuidetoPHARMACOLOGY" id="2029"/>
<dbReference type="GlyCosmos" id="P49840">
    <property type="glycosylation" value="1 site, 1 glycan"/>
</dbReference>
<dbReference type="GlyGen" id="P49840">
    <property type="glycosylation" value="2 sites, 1 O-linked glycan (2 sites)"/>
</dbReference>
<dbReference type="iPTMnet" id="P49840"/>
<dbReference type="PhosphoSitePlus" id="P49840"/>
<dbReference type="SwissPalm" id="P49840"/>
<dbReference type="BioMuta" id="GSK3A"/>
<dbReference type="DMDM" id="12644292"/>
<dbReference type="CPTAC" id="CPTAC-3040"/>
<dbReference type="jPOST" id="P49840"/>
<dbReference type="MassIVE" id="P49840"/>
<dbReference type="PaxDb" id="9606-ENSP00000222330"/>
<dbReference type="PeptideAtlas" id="P49840"/>
<dbReference type="ProteomicsDB" id="56150"/>
<dbReference type="Pumba" id="P49840"/>
<dbReference type="Antibodypedia" id="3833">
    <property type="antibodies" value="1204 antibodies from 48 providers"/>
</dbReference>
<dbReference type="DNASU" id="2931"/>
<dbReference type="Ensembl" id="ENST00000222330.8">
    <property type="protein sequence ID" value="ENSP00000222330.3"/>
    <property type="gene ID" value="ENSG00000105723.13"/>
</dbReference>
<dbReference type="Ensembl" id="ENST00000453535.1">
    <property type="protein sequence ID" value="ENSP00000412663.1"/>
    <property type="gene ID" value="ENSG00000105723.13"/>
</dbReference>
<dbReference type="GeneID" id="2931"/>
<dbReference type="KEGG" id="hsa:2931"/>
<dbReference type="MANE-Select" id="ENST00000222330.8">
    <property type="protein sequence ID" value="ENSP00000222330.3"/>
    <property type="RefSeq nucleotide sequence ID" value="NM_019884.3"/>
    <property type="RefSeq protein sequence ID" value="NP_063937.2"/>
</dbReference>
<dbReference type="UCSC" id="uc002otb.2">
    <property type="organism name" value="human"/>
</dbReference>
<dbReference type="AGR" id="HGNC:4616"/>
<dbReference type="CTD" id="2931"/>
<dbReference type="DisGeNET" id="2931"/>
<dbReference type="GeneCards" id="GSK3A"/>
<dbReference type="HGNC" id="HGNC:4616">
    <property type="gene designation" value="GSK3A"/>
</dbReference>
<dbReference type="HPA" id="ENSG00000105723">
    <property type="expression patterns" value="Low tissue specificity"/>
</dbReference>
<dbReference type="MIM" id="606784">
    <property type="type" value="gene"/>
</dbReference>
<dbReference type="neXtProt" id="NX_P49840"/>
<dbReference type="OpenTargets" id="ENSG00000105723"/>
<dbReference type="PharmGKB" id="PA29008"/>
<dbReference type="VEuPathDB" id="HostDB:ENSG00000105723"/>
<dbReference type="eggNOG" id="KOG0658">
    <property type="taxonomic scope" value="Eukaryota"/>
</dbReference>
<dbReference type="GeneTree" id="ENSGT00520000055635"/>
<dbReference type="InParanoid" id="P49840"/>
<dbReference type="OMA" id="CLHAFFD"/>
<dbReference type="OrthoDB" id="272141at2759"/>
<dbReference type="PAN-GO" id="P49840">
    <property type="GO annotations" value="10 GO annotations based on evolutionary models"/>
</dbReference>
<dbReference type="PhylomeDB" id="P49840"/>
<dbReference type="TreeFam" id="TF101104"/>
<dbReference type="BRENDA" id="2.7.11.26">
    <property type="organism ID" value="2681"/>
</dbReference>
<dbReference type="PathwayCommons" id="P49840"/>
<dbReference type="Reactome" id="R-HSA-198323">
    <property type="pathway name" value="AKT phosphorylates targets in the cytosol"/>
</dbReference>
<dbReference type="Reactome" id="R-HSA-381038">
    <property type="pathway name" value="XBP1(S) activates chaperone genes"/>
</dbReference>
<dbReference type="Reactome" id="R-HSA-5674400">
    <property type="pathway name" value="Constitutive Signaling by AKT1 E17K in Cancer"/>
</dbReference>
<dbReference type="Reactome" id="R-HSA-9635465">
    <property type="pathway name" value="Suppression of apoptosis"/>
</dbReference>
<dbReference type="Reactome" id="R-HSA-9683610">
    <property type="pathway name" value="Maturation of nucleoprotein"/>
</dbReference>
<dbReference type="Reactome" id="R-HSA-9694631">
    <property type="pathway name" value="Maturation of nucleoprotein"/>
</dbReference>
<dbReference type="SignaLink" id="P49840"/>
<dbReference type="SIGNOR" id="P49840"/>
<dbReference type="BioGRID-ORCS" id="2931">
    <property type="hits" value="21 hits in 1191 CRISPR screens"/>
</dbReference>
<dbReference type="CD-CODE" id="7FF4107C">
    <property type="entry name" value="beta-Catenin Destruction Complex"/>
</dbReference>
<dbReference type="CD-CODE" id="8C2F96ED">
    <property type="entry name" value="Centrosome"/>
</dbReference>
<dbReference type="ChiTaRS" id="GSK3A">
    <property type="organism name" value="human"/>
</dbReference>
<dbReference type="GeneWiki" id="GSK3A"/>
<dbReference type="GenomeRNAi" id="2931"/>
<dbReference type="Pharos" id="P49840">
    <property type="development level" value="Tclin"/>
</dbReference>
<dbReference type="PRO" id="PR:P49840"/>
<dbReference type="Proteomes" id="UP000005640">
    <property type="component" value="Chromosome 19"/>
</dbReference>
<dbReference type="RNAct" id="P49840">
    <property type="molecule type" value="protein"/>
</dbReference>
<dbReference type="Bgee" id="ENSG00000105723">
    <property type="expression patterns" value="Expressed in cortical plate and 213 other cell types or tissues"/>
</dbReference>
<dbReference type="ExpressionAtlas" id="P49840">
    <property type="expression patterns" value="baseline and differential"/>
</dbReference>
<dbReference type="GO" id="GO:0097440">
    <property type="term" value="C:apical dendrite"/>
    <property type="evidence" value="ECO:0000303"/>
    <property type="project" value="ARUK-UCL"/>
</dbReference>
<dbReference type="GO" id="GO:0030424">
    <property type="term" value="C:axon"/>
    <property type="evidence" value="ECO:0000318"/>
    <property type="project" value="GO_Central"/>
</dbReference>
<dbReference type="GO" id="GO:0030877">
    <property type="term" value="C:beta-catenin destruction complex"/>
    <property type="evidence" value="ECO:0000304"/>
    <property type="project" value="UniProtKB"/>
</dbReference>
<dbReference type="GO" id="GO:0005737">
    <property type="term" value="C:cytoplasm"/>
    <property type="evidence" value="ECO:0000318"/>
    <property type="project" value="GO_Central"/>
</dbReference>
<dbReference type="GO" id="GO:0005829">
    <property type="term" value="C:cytosol"/>
    <property type="evidence" value="ECO:0000318"/>
    <property type="project" value="GO_Central"/>
</dbReference>
<dbReference type="GO" id="GO:0005739">
    <property type="term" value="C:mitochondrion"/>
    <property type="evidence" value="ECO:0007669"/>
    <property type="project" value="GOC"/>
</dbReference>
<dbReference type="GO" id="GO:0043025">
    <property type="term" value="C:neuronal cell body"/>
    <property type="evidence" value="ECO:0000303"/>
    <property type="project" value="ARUK-UCL"/>
</dbReference>
<dbReference type="GO" id="GO:0005634">
    <property type="term" value="C:nucleus"/>
    <property type="evidence" value="ECO:0000318"/>
    <property type="project" value="GO_Central"/>
</dbReference>
<dbReference type="GO" id="GO:0098794">
    <property type="term" value="C:postsynapse"/>
    <property type="evidence" value="ECO:0007669"/>
    <property type="project" value="GOC"/>
</dbReference>
<dbReference type="GO" id="GO:1990635">
    <property type="term" value="C:proximal dendrite"/>
    <property type="evidence" value="ECO:0000303"/>
    <property type="project" value="ARUK-UCL"/>
</dbReference>
<dbReference type="GO" id="GO:0005524">
    <property type="term" value="F:ATP binding"/>
    <property type="evidence" value="ECO:0007669"/>
    <property type="project" value="UniProtKB-KW"/>
</dbReference>
<dbReference type="GO" id="GO:0034236">
    <property type="term" value="F:protein kinase A catalytic subunit binding"/>
    <property type="evidence" value="ECO:0000353"/>
    <property type="project" value="BHF-UCL"/>
</dbReference>
<dbReference type="GO" id="GO:0106310">
    <property type="term" value="F:protein serine kinase activity"/>
    <property type="evidence" value="ECO:0007669"/>
    <property type="project" value="RHEA"/>
</dbReference>
<dbReference type="GO" id="GO:0004674">
    <property type="term" value="F:protein serine/threonine kinase activity"/>
    <property type="evidence" value="ECO:0000314"/>
    <property type="project" value="BHF-UCL"/>
</dbReference>
<dbReference type="GO" id="GO:0005102">
    <property type="term" value="F:signaling receptor binding"/>
    <property type="evidence" value="ECO:0000353"/>
    <property type="project" value="ARUK-UCL"/>
</dbReference>
<dbReference type="GO" id="GO:0048156">
    <property type="term" value="F:tau protein binding"/>
    <property type="evidence" value="ECO:0000303"/>
    <property type="project" value="ARUK-UCL"/>
</dbReference>
<dbReference type="GO" id="GO:0050321">
    <property type="term" value="F:tau-protein kinase activity"/>
    <property type="evidence" value="ECO:0000304"/>
    <property type="project" value="UniProtKB"/>
</dbReference>
<dbReference type="GO" id="GO:0141068">
    <property type="term" value="P:autosome genomic imprinting"/>
    <property type="evidence" value="ECO:0007669"/>
    <property type="project" value="Ensembl"/>
</dbReference>
<dbReference type="GO" id="GO:0003214">
    <property type="term" value="P:cardiac left ventricle morphogenesis"/>
    <property type="evidence" value="ECO:0000250"/>
    <property type="project" value="BHF-UCL"/>
</dbReference>
<dbReference type="GO" id="GO:0030154">
    <property type="term" value="P:cell differentiation"/>
    <property type="evidence" value="ECO:0000318"/>
    <property type="project" value="GO_Central"/>
</dbReference>
<dbReference type="GO" id="GO:0016477">
    <property type="term" value="P:cell migration"/>
    <property type="evidence" value="ECO:0007669"/>
    <property type="project" value="Ensembl"/>
</dbReference>
<dbReference type="GO" id="GO:0071385">
    <property type="term" value="P:cellular response to glucocorticoid stimulus"/>
    <property type="evidence" value="ECO:0007669"/>
    <property type="project" value="Ensembl"/>
</dbReference>
<dbReference type="GO" id="GO:0032869">
    <property type="term" value="P:cellular response to insulin stimulus"/>
    <property type="evidence" value="ECO:0000315"/>
    <property type="project" value="BHF-UCL"/>
</dbReference>
<dbReference type="GO" id="GO:0036016">
    <property type="term" value="P:cellular response to interleukin-3"/>
    <property type="evidence" value="ECO:0000250"/>
    <property type="project" value="UniProtKB"/>
</dbReference>
<dbReference type="GO" id="GO:0071285">
    <property type="term" value="P:cellular response to lithium ion"/>
    <property type="evidence" value="ECO:0007669"/>
    <property type="project" value="Ensembl"/>
</dbReference>
<dbReference type="GO" id="GO:0060079">
    <property type="term" value="P:excitatory postsynaptic potential"/>
    <property type="evidence" value="ECO:0000303"/>
    <property type="project" value="ParkinsonsUK-UCL"/>
</dbReference>
<dbReference type="GO" id="GO:0097191">
    <property type="term" value="P:extrinsic apoptotic signaling pathway"/>
    <property type="evidence" value="ECO:0000250"/>
    <property type="project" value="ARUK-UCL"/>
</dbReference>
<dbReference type="GO" id="GO:0097192">
    <property type="term" value="P:extrinsic apoptotic signaling pathway in absence of ligand"/>
    <property type="evidence" value="ECO:0000250"/>
    <property type="project" value="UniProtKB"/>
</dbReference>
<dbReference type="GO" id="GO:0007212">
    <property type="term" value="P:G protein-coupled dopamine receptor signaling pathway"/>
    <property type="evidence" value="ECO:0000303"/>
    <property type="project" value="ParkinsonsUK-UCL"/>
</dbReference>
<dbReference type="GO" id="GO:0005977">
    <property type="term" value="P:glycogen metabolic process"/>
    <property type="evidence" value="ECO:0007669"/>
    <property type="project" value="UniProtKB-KW"/>
</dbReference>
<dbReference type="GO" id="GO:0008286">
    <property type="term" value="P:insulin receptor signaling pathway"/>
    <property type="evidence" value="ECO:0000250"/>
    <property type="project" value="BHF-UCL"/>
</dbReference>
<dbReference type="GO" id="GO:0090090">
    <property type="term" value="P:negative regulation of canonical Wnt signaling pathway"/>
    <property type="evidence" value="ECO:0000318"/>
    <property type="project" value="GO_Central"/>
</dbReference>
<dbReference type="GO" id="GO:0061052">
    <property type="term" value="P:negative regulation of cell growth involved in cardiac muscle cell development"/>
    <property type="evidence" value="ECO:0000250"/>
    <property type="project" value="BHF-UCL"/>
</dbReference>
<dbReference type="GO" id="GO:0046325">
    <property type="term" value="P:negative regulation of D-glucose import"/>
    <property type="evidence" value="ECO:0000315"/>
    <property type="project" value="BHF-UCL"/>
</dbReference>
<dbReference type="GO" id="GO:2000466">
    <property type="term" value="P:negative regulation of glycogen (starch) synthase activity"/>
    <property type="evidence" value="ECO:0000304"/>
    <property type="project" value="UniProtKB"/>
</dbReference>
<dbReference type="GO" id="GO:0045719">
    <property type="term" value="P:negative regulation of glycogen biosynthetic process"/>
    <property type="evidence" value="ECO:0000304"/>
    <property type="project" value="UniProtKB"/>
</dbReference>
<dbReference type="GO" id="GO:0046627">
    <property type="term" value="P:negative regulation of insulin receptor signaling pathway"/>
    <property type="evidence" value="ECO:0000315"/>
    <property type="project" value="BHF-UCL"/>
</dbReference>
<dbReference type="GO" id="GO:0032007">
    <property type="term" value="P:negative regulation of TOR signaling"/>
    <property type="evidence" value="ECO:0000250"/>
    <property type="project" value="BHF-UCL"/>
</dbReference>
<dbReference type="GO" id="GO:2000077">
    <property type="term" value="P:negative regulation of type B pancreatic cell development"/>
    <property type="evidence" value="ECO:0000304"/>
    <property type="project" value="UniProtKB"/>
</dbReference>
<dbReference type="GO" id="GO:0010905">
    <property type="term" value="P:negative regulation of UDP-glucose catabolic process"/>
    <property type="evidence" value="ECO:0000305"/>
    <property type="project" value="UniProtKB"/>
</dbReference>
<dbReference type="GO" id="GO:0007399">
    <property type="term" value="P:nervous system development"/>
    <property type="evidence" value="ECO:0007669"/>
    <property type="project" value="UniProtKB-KW"/>
</dbReference>
<dbReference type="GO" id="GO:0071879">
    <property type="term" value="P:positive regulation of adenylate cyclase-activating adrenergic receptor signaling pathway"/>
    <property type="evidence" value="ECO:0000250"/>
    <property type="project" value="BHF-UCL"/>
</dbReference>
<dbReference type="GO" id="GO:0106071">
    <property type="term" value="P:positive regulation of adenylate cyclase-activating G protein-coupled receptor signaling pathway"/>
    <property type="evidence" value="ECO:0000250"/>
    <property type="project" value="BHF-UCL"/>
</dbReference>
<dbReference type="GO" id="GO:1902004">
    <property type="term" value="P:positive regulation of amyloid-beta formation"/>
    <property type="evidence" value="ECO:0000315"/>
    <property type="project" value="ARUK-UCL"/>
</dbReference>
<dbReference type="GO" id="GO:0010508">
    <property type="term" value="P:positive regulation of autophagy"/>
    <property type="evidence" value="ECO:0000250"/>
    <property type="project" value="UniProtKB"/>
</dbReference>
<dbReference type="GO" id="GO:0010628">
    <property type="term" value="P:positive regulation of gene expression"/>
    <property type="evidence" value="ECO:0000250"/>
    <property type="project" value="ARUK-UCL"/>
</dbReference>
<dbReference type="GO" id="GO:0045823">
    <property type="term" value="P:positive regulation of heart contraction"/>
    <property type="evidence" value="ECO:0000250"/>
    <property type="project" value="BHF-UCL"/>
</dbReference>
<dbReference type="GO" id="GO:1901030">
    <property type="term" value="P:positive regulation of mitochondrial outer membrane permeabilization involved in apoptotic signaling pathway"/>
    <property type="evidence" value="ECO:0000250"/>
    <property type="project" value="UniProtKB"/>
</dbReference>
<dbReference type="GO" id="GO:0043525">
    <property type="term" value="P:positive regulation of neuron apoptotic process"/>
    <property type="evidence" value="ECO:0000318"/>
    <property type="project" value="GO_Central"/>
</dbReference>
<dbReference type="GO" id="GO:0032436">
    <property type="term" value="P:positive regulation of proteasomal ubiquitin-dependent protein catabolic process"/>
    <property type="evidence" value="ECO:0000315"/>
    <property type="project" value="ARUK-UCL"/>
</dbReference>
<dbReference type="GO" id="GO:0045732">
    <property type="term" value="P:positive regulation of protein catabolic process"/>
    <property type="evidence" value="ECO:0000303"/>
    <property type="project" value="BHF-UCL"/>
</dbReference>
<dbReference type="GO" id="GO:1903955">
    <property type="term" value="P:positive regulation of protein targeting to mitochondrion"/>
    <property type="evidence" value="ECO:0000315"/>
    <property type="project" value="ParkinsonsUK-UCL"/>
</dbReference>
<dbReference type="GO" id="GO:0031398">
    <property type="term" value="P:positive regulation of protein ubiquitination"/>
    <property type="evidence" value="ECO:0000315"/>
    <property type="project" value="ARUK-UCL"/>
</dbReference>
<dbReference type="GO" id="GO:0045944">
    <property type="term" value="P:positive regulation of transcription by RNA polymerase II"/>
    <property type="evidence" value="ECO:0007669"/>
    <property type="project" value="Ensembl"/>
</dbReference>
<dbReference type="GO" id="GO:0043161">
    <property type="term" value="P:proteasome-mediated ubiquitin-dependent protein catabolic process"/>
    <property type="evidence" value="ECO:0000250"/>
    <property type="project" value="UniProtKB"/>
</dbReference>
<dbReference type="GO" id="GO:0070507">
    <property type="term" value="P:regulation of microtubule cytoskeleton organization"/>
    <property type="evidence" value="ECO:0000318"/>
    <property type="project" value="GO_Central"/>
</dbReference>
<dbReference type="GO" id="GO:1901524">
    <property type="term" value="P:regulation of mitophagy"/>
    <property type="evidence" value="ECO:0000315"/>
    <property type="project" value="ParkinsonsUK-UCL"/>
</dbReference>
<dbReference type="GO" id="GO:0010975">
    <property type="term" value="P:regulation of neuron projection development"/>
    <property type="evidence" value="ECO:0000318"/>
    <property type="project" value="GO_Central"/>
</dbReference>
<dbReference type="GO" id="GO:0003073">
    <property type="term" value="P:regulation of systemic arterial blood pressure"/>
    <property type="evidence" value="ECO:0000250"/>
    <property type="project" value="BHF-UCL"/>
</dbReference>
<dbReference type="GO" id="GO:0019082">
    <property type="term" value="P:viral protein processing"/>
    <property type="evidence" value="ECO:0000304"/>
    <property type="project" value="Reactome"/>
</dbReference>
<dbReference type="GO" id="GO:0016055">
    <property type="term" value="P:Wnt signaling pathway"/>
    <property type="evidence" value="ECO:0007669"/>
    <property type="project" value="UniProtKB-KW"/>
</dbReference>
<dbReference type="CDD" id="cd14137">
    <property type="entry name" value="STKc_GSK3"/>
    <property type="match status" value="1"/>
</dbReference>
<dbReference type="FunFam" id="1.10.510.10:FF:000055">
    <property type="entry name" value="Glycogen synthase kinase-3 beta"/>
    <property type="match status" value="1"/>
</dbReference>
<dbReference type="FunFam" id="3.30.200.20:FF:000009">
    <property type="entry name" value="Glycogen synthase kinase-3 beta"/>
    <property type="match status" value="1"/>
</dbReference>
<dbReference type="Gene3D" id="3.30.200.20">
    <property type="entry name" value="Phosphorylase Kinase, domain 1"/>
    <property type="match status" value="1"/>
</dbReference>
<dbReference type="Gene3D" id="1.10.510.10">
    <property type="entry name" value="Transferase(Phosphotransferase) domain 1"/>
    <property type="match status" value="1"/>
</dbReference>
<dbReference type="InterPro" id="IPR050591">
    <property type="entry name" value="GSK-3"/>
</dbReference>
<dbReference type="InterPro" id="IPR011009">
    <property type="entry name" value="Kinase-like_dom_sf"/>
</dbReference>
<dbReference type="InterPro" id="IPR000719">
    <property type="entry name" value="Prot_kinase_dom"/>
</dbReference>
<dbReference type="InterPro" id="IPR017441">
    <property type="entry name" value="Protein_kinase_ATP_BS"/>
</dbReference>
<dbReference type="InterPro" id="IPR008271">
    <property type="entry name" value="Ser/Thr_kinase_AS"/>
</dbReference>
<dbReference type="InterPro" id="IPR039192">
    <property type="entry name" value="STKc_GSK3"/>
</dbReference>
<dbReference type="PANTHER" id="PTHR24057">
    <property type="entry name" value="GLYCOGEN SYNTHASE KINASE-3 ALPHA"/>
    <property type="match status" value="1"/>
</dbReference>
<dbReference type="PANTHER" id="PTHR24057:SF14">
    <property type="entry name" value="GLYCOGEN SYNTHASE KINASE-3 ALPHA"/>
    <property type="match status" value="1"/>
</dbReference>
<dbReference type="Pfam" id="PF00069">
    <property type="entry name" value="Pkinase"/>
    <property type="match status" value="1"/>
</dbReference>
<dbReference type="SMART" id="SM00220">
    <property type="entry name" value="S_TKc"/>
    <property type="match status" value="1"/>
</dbReference>
<dbReference type="SUPFAM" id="SSF56112">
    <property type="entry name" value="Protein kinase-like (PK-like)"/>
    <property type="match status" value="1"/>
</dbReference>
<dbReference type="PROSITE" id="PS00107">
    <property type="entry name" value="PROTEIN_KINASE_ATP"/>
    <property type="match status" value="1"/>
</dbReference>
<dbReference type="PROSITE" id="PS50011">
    <property type="entry name" value="PROTEIN_KINASE_DOM"/>
    <property type="match status" value="1"/>
</dbReference>
<dbReference type="PROSITE" id="PS00108">
    <property type="entry name" value="PROTEIN_KINASE_ST"/>
    <property type="match status" value="1"/>
</dbReference>
<accession>P49840</accession>
<accession>O14959</accession>
<name>GSK3A_HUMAN</name>
<reference key="1">
    <citation type="submission" date="1995-03" db="EMBL/GenBank/DDBJ databases">
        <title>Glycogen synthase kinase 3 and dorsoventral patterning in Xenopus embryos.</title>
        <authorList>
            <person name="He X."/>
            <person name="Saint-Jeannet J.P."/>
            <person name="Woodgett J.R."/>
            <person name="Varmus H.E."/>
            <person name="Dawid I.B."/>
        </authorList>
    </citation>
    <scope>NUCLEOTIDE SEQUENCE [MRNA]</scope>
    <source>
        <tissue>Foreskin</tissue>
    </source>
</reference>
<reference key="2">
    <citation type="submission" date="1997-11" db="EMBL/GenBank/DDBJ databases">
        <title>Isolation of cDNA clones for human glycogen synthase kinase 3alpha.</title>
        <authorList>
            <person name="Hoshino T."/>
            <person name="Kondo K."/>
            <person name="Ishiguro K."/>
            <person name="Takashima A."/>
            <person name="Imahori K."/>
        </authorList>
    </citation>
    <scope>NUCLEOTIDE SEQUENCE [MRNA]</scope>
    <source>
        <tissue>Brain</tissue>
    </source>
</reference>
<reference key="3">
    <citation type="journal article" date="2004" name="Nature">
        <title>The DNA sequence and biology of human chromosome 19.</title>
        <authorList>
            <person name="Grimwood J."/>
            <person name="Gordon L.A."/>
            <person name="Olsen A.S."/>
            <person name="Terry A."/>
            <person name="Schmutz J."/>
            <person name="Lamerdin J.E."/>
            <person name="Hellsten U."/>
            <person name="Goodstein D."/>
            <person name="Couronne O."/>
            <person name="Tran-Gyamfi M."/>
            <person name="Aerts A."/>
            <person name="Altherr M."/>
            <person name="Ashworth L."/>
            <person name="Bajorek E."/>
            <person name="Black S."/>
            <person name="Branscomb E."/>
            <person name="Caenepeel S."/>
            <person name="Carrano A.V."/>
            <person name="Caoile C."/>
            <person name="Chan Y.M."/>
            <person name="Christensen M."/>
            <person name="Cleland C.A."/>
            <person name="Copeland A."/>
            <person name="Dalin E."/>
            <person name="Dehal P."/>
            <person name="Denys M."/>
            <person name="Detter J.C."/>
            <person name="Escobar J."/>
            <person name="Flowers D."/>
            <person name="Fotopulos D."/>
            <person name="Garcia C."/>
            <person name="Georgescu A.M."/>
            <person name="Glavina T."/>
            <person name="Gomez M."/>
            <person name="Gonzales E."/>
            <person name="Groza M."/>
            <person name="Hammon N."/>
            <person name="Hawkins T."/>
            <person name="Haydu L."/>
            <person name="Ho I."/>
            <person name="Huang W."/>
            <person name="Israni S."/>
            <person name="Jett J."/>
            <person name="Kadner K."/>
            <person name="Kimball H."/>
            <person name="Kobayashi A."/>
            <person name="Larionov V."/>
            <person name="Leem S.-H."/>
            <person name="Lopez F."/>
            <person name="Lou Y."/>
            <person name="Lowry S."/>
            <person name="Malfatti S."/>
            <person name="Martinez D."/>
            <person name="McCready P.M."/>
            <person name="Medina C."/>
            <person name="Morgan J."/>
            <person name="Nelson K."/>
            <person name="Nolan M."/>
            <person name="Ovcharenko I."/>
            <person name="Pitluck S."/>
            <person name="Pollard M."/>
            <person name="Popkie A.P."/>
            <person name="Predki P."/>
            <person name="Quan G."/>
            <person name="Ramirez L."/>
            <person name="Rash S."/>
            <person name="Retterer J."/>
            <person name="Rodriguez A."/>
            <person name="Rogers S."/>
            <person name="Salamov A."/>
            <person name="Salazar A."/>
            <person name="She X."/>
            <person name="Smith D."/>
            <person name="Slezak T."/>
            <person name="Solovyev V."/>
            <person name="Thayer N."/>
            <person name="Tice H."/>
            <person name="Tsai M."/>
            <person name="Ustaszewska A."/>
            <person name="Vo N."/>
            <person name="Wagner M."/>
            <person name="Wheeler J."/>
            <person name="Wu K."/>
            <person name="Xie G."/>
            <person name="Yang J."/>
            <person name="Dubchak I."/>
            <person name="Furey T.S."/>
            <person name="DeJong P."/>
            <person name="Dickson M."/>
            <person name="Gordon D."/>
            <person name="Eichler E.E."/>
            <person name="Pennacchio L.A."/>
            <person name="Richardson P."/>
            <person name="Stubbs L."/>
            <person name="Rokhsar D.S."/>
            <person name="Myers R.M."/>
            <person name="Rubin E.M."/>
            <person name="Lucas S.M."/>
        </authorList>
    </citation>
    <scope>NUCLEOTIDE SEQUENCE [LARGE SCALE GENOMIC DNA]</scope>
</reference>
<reference key="4">
    <citation type="journal article" date="2004" name="Genome Res.">
        <title>The status, quality, and expansion of the NIH full-length cDNA project: the Mammalian Gene Collection (MGC).</title>
        <authorList>
            <consortium name="The MGC Project Team"/>
        </authorList>
    </citation>
    <scope>NUCLEOTIDE SEQUENCE [LARGE SCALE MRNA]</scope>
    <source>
        <tissue>Eye</tissue>
        <tissue>Pancreas</tissue>
    </source>
</reference>
<reference key="5">
    <citation type="journal article" date="2000" name="Diabetes">
        <title>Potential role of glycogen synthase kinase-3 in skeletal muscle insulin resistance of type 2 diabetes.</title>
        <authorList>
            <person name="Nikoulina S.E."/>
            <person name="Ciaraldi T.P."/>
            <person name="Mudaliar S."/>
            <person name="Mohideen P."/>
            <person name="Carter L."/>
            <person name="Henry R.R."/>
        </authorList>
    </citation>
    <scope>FUNCTION</scope>
    <scope>ASSOCIATION WITH DIABETES MELLITUS</scope>
</reference>
<reference key="6">
    <citation type="journal article" date="2003" name="Nature">
        <title>GSK-3alpha regulates production of Alzheimer's disease amyloid-beta peptides.</title>
        <authorList>
            <person name="Phiel C.J."/>
            <person name="Wilson C.A."/>
            <person name="Lee V.M."/>
            <person name="Klein P.S."/>
        </authorList>
    </citation>
    <scope>ASSOCIATION WITH ALZHEIMER DISEASE</scope>
    <scope>FUNCTION</scope>
</reference>
<reference key="7">
    <citation type="journal article" date="2006" name="Eur. J. Neurosci.">
        <title>GSK3alpha exhibits beta-catenin and tau directed kinase activities that are modulated by Wnt.</title>
        <authorList>
            <person name="Asuni A.A."/>
            <person name="Hooper C."/>
            <person name="Reynolds C.H."/>
            <person name="Lovestone S."/>
            <person name="Anderton B.H."/>
            <person name="Killick R."/>
        </authorList>
    </citation>
    <scope>FUNCTION IN WNT SIGNALING</scope>
    <scope>INTERACTION WITH AXIN1 AND CTNNB1/BETA-CATENIN</scope>
</reference>
<reference key="8">
    <citation type="journal article" date="2001" name="Chem. Rev.">
        <title>Glycogen synthase kinase-3: properties, functions, and regulation.</title>
        <authorList>
            <person name="Ali A."/>
            <person name="Hoeflich K.P."/>
            <person name="Woodgett J.R."/>
        </authorList>
    </citation>
    <scope>REVIEW ON FUNCTION</scope>
    <scope>ACTIVITY REGULATION</scope>
</reference>
<reference key="9">
    <citation type="journal article" date="2007" name="Diabetes Res. Clin. Pract.">
        <title>The role of GSK3 in glucose homeostasis and the development of insulin resistance.</title>
        <authorList>
            <person name="Lee J."/>
            <person name="Kim M.S."/>
        </authorList>
    </citation>
    <scope>REVIEW ON FUNCTION</scope>
</reference>
<reference key="10">
    <citation type="journal article" date="2008" name="Cell Death Differ.">
        <title>Identification of an antiapoptotic protein complex at death receptors.</title>
        <authorList>
            <person name="Sun M."/>
            <person name="Song L."/>
            <person name="Li Y."/>
            <person name="Zhou T."/>
            <person name="Jope R.S."/>
        </authorList>
    </citation>
    <scope>INTERACTION WITH DDX3X AND TNFRSF10B</scope>
</reference>
<reference key="11">
    <citation type="journal article" date="2008" name="Mol. Cell">
        <title>Kinase-selective enrichment enables quantitative phosphoproteomics of the kinome across the cell cycle.</title>
        <authorList>
            <person name="Daub H."/>
            <person name="Olsen J.V."/>
            <person name="Bairlein M."/>
            <person name="Gnad F."/>
            <person name="Oppermann F.S."/>
            <person name="Korner R."/>
            <person name="Greff Z."/>
            <person name="Keri G."/>
            <person name="Stemmann O."/>
            <person name="Mann M."/>
        </authorList>
    </citation>
    <scope>PHOSPHORYLATION [LARGE SCALE ANALYSIS] AT SER-2 AND SER-72</scope>
    <scope>IDENTIFICATION BY MASS SPECTROMETRY [LARGE SCALE ANALYSIS]</scope>
    <source>
        <tissue>Cervix carcinoma</tissue>
    </source>
</reference>
<reference key="12">
    <citation type="journal article" date="2008" name="Proc. Natl. Acad. Sci. U.S.A.">
        <title>A quantitative atlas of mitotic phosphorylation.</title>
        <authorList>
            <person name="Dephoure N."/>
            <person name="Zhou C."/>
            <person name="Villen J."/>
            <person name="Beausoleil S.A."/>
            <person name="Bakalarski C.E."/>
            <person name="Elledge S.J."/>
            <person name="Gygi S.P."/>
        </authorList>
    </citation>
    <scope>IDENTIFICATION BY MASS SPECTROMETRY [LARGE SCALE ANALYSIS]</scope>
    <source>
        <tissue>Cervix carcinoma</tissue>
    </source>
</reference>
<reference key="13">
    <citation type="journal article" date="2009" name="Anal. Chem.">
        <title>Lys-N and trypsin cover complementary parts of the phosphoproteome in a refined SCX-based approach.</title>
        <authorList>
            <person name="Gauci S."/>
            <person name="Helbig A.O."/>
            <person name="Slijper M."/>
            <person name="Krijgsveld J."/>
            <person name="Heck A.J."/>
            <person name="Mohammed S."/>
        </authorList>
    </citation>
    <scope>ACETYLATION [LARGE SCALE ANALYSIS] AT SER-2</scope>
    <scope>CLEAVAGE OF INITIATOR METHIONINE [LARGE SCALE ANALYSIS]</scope>
    <scope>IDENTIFICATION BY MASS SPECTROMETRY [LARGE SCALE ANALYSIS]</scope>
</reference>
<reference key="14">
    <citation type="journal article" date="2009" name="Br. J. Pharmacol.">
        <title>Glycogen synthase kinase 3: more than a namesake.</title>
        <authorList>
            <person name="Rayasam G.V."/>
            <person name="Tulasi V.K."/>
            <person name="Sodhi R."/>
            <person name="Davis J.A."/>
            <person name="Ray A."/>
        </authorList>
    </citation>
    <scope>REVIEW ON FUNCTION</scope>
    <scope>ACTIVITY REGULATION</scope>
</reference>
<reference key="15">
    <citation type="journal article" date="2009" name="J. Biol. Chem.">
        <title>GSK-3 phosphorylates delta-catenin and negatively regulates its stability via ubiquitination/proteosome-mediated proteolysis.</title>
        <authorList>
            <person name="Oh M."/>
            <person name="Kim H."/>
            <person name="Yang I."/>
            <person name="Park J.H."/>
            <person name="Cong W.T."/>
            <person name="Baek M.C."/>
            <person name="Bareiss S."/>
            <person name="Ki H."/>
            <person name="Lu Q."/>
            <person name="No J."/>
            <person name="Kwon I."/>
            <person name="Choi J.K."/>
            <person name="Kim K."/>
        </authorList>
    </citation>
    <scope>INTERACTION WITH CTNND2</scope>
</reference>
<reference key="16">
    <citation type="journal article" date="2009" name="Mol. Cell. Proteomics">
        <title>Large-scale proteomics analysis of the human kinome.</title>
        <authorList>
            <person name="Oppermann F.S."/>
            <person name="Gnad F."/>
            <person name="Olsen J.V."/>
            <person name="Hornberger R."/>
            <person name="Greff Z."/>
            <person name="Keri G."/>
            <person name="Mann M."/>
            <person name="Daub H."/>
        </authorList>
    </citation>
    <scope>ACETYLATION [LARGE SCALE ANALYSIS] AT SER-2</scope>
    <scope>PHOSPHORYLATION [LARGE SCALE ANALYSIS] AT SER-2; SER-77 AND SER-97</scope>
    <scope>CLEAVAGE OF INITIATOR METHIONINE [LARGE SCALE ANALYSIS]</scope>
    <scope>IDENTIFICATION BY MASS SPECTROMETRY [LARGE SCALE ANALYSIS]</scope>
</reference>
<reference key="17">
    <citation type="journal article" date="2009" name="Sci. Signal.">
        <title>Quantitative phosphoproteomic analysis of T cell receptor signaling reveals system-wide modulation of protein-protein interactions.</title>
        <authorList>
            <person name="Mayya V."/>
            <person name="Lundgren D.H."/>
            <person name="Hwang S.-I."/>
            <person name="Rezaul K."/>
            <person name="Wu L."/>
            <person name="Eng J.K."/>
            <person name="Rodionov V."/>
            <person name="Han D.K."/>
        </authorList>
    </citation>
    <scope>IDENTIFICATION BY MASS SPECTROMETRY [LARGE SCALE ANALYSIS]</scope>
    <source>
        <tissue>Leukemic T-cell</tissue>
    </source>
</reference>
<reference key="18">
    <citation type="journal article" date="2011" name="BMC Syst. Biol.">
        <title>Initial characterization of the human central proteome.</title>
        <authorList>
            <person name="Burkard T.R."/>
            <person name="Planyavsky M."/>
            <person name="Kaupe I."/>
            <person name="Breitwieser F.P."/>
            <person name="Buerckstuemmer T."/>
            <person name="Bennett K.L."/>
            <person name="Superti-Furga G."/>
            <person name="Colinge J."/>
        </authorList>
    </citation>
    <scope>IDENTIFICATION BY MASS SPECTROMETRY [LARGE SCALE ANALYSIS]</scope>
</reference>
<reference key="19">
    <citation type="journal article" date="2012" name="Science">
        <title>GSK3-TIP60-ULK1 signaling pathway links growth factor deprivation to autophagy.</title>
        <authorList>
            <person name="Lin S.Y."/>
            <person name="Li T.Y."/>
            <person name="Liu Q."/>
            <person name="Zhang C."/>
            <person name="Li X."/>
            <person name="Chen Y."/>
            <person name="Zhang S.M."/>
            <person name="Lian G."/>
            <person name="Liu Q."/>
            <person name="Ruan K."/>
            <person name="Wang Z."/>
            <person name="Zhang C.S."/>
            <person name="Chien K.Y."/>
            <person name="Wu J."/>
            <person name="Li Q."/>
            <person name="Han J."/>
            <person name="Lin S.C."/>
        </authorList>
    </citation>
    <scope>CATALYTIC ACTIVITY</scope>
</reference>
<reference key="20">
    <citation type="journal article" date="2013" name="J. Proteome Res.">
        <title>Toward a comprehensive characterization of a human cancer cell phosphoproteome.</title>
        <authorList>
            <person name="Zhou H."/>
            <person name="Di Palma S."/>
            <person name="Preisinger C."/>
            <person name="Peng M."/>
            <person name="Polat A.N."/>
            <person name="Heck A.J."/>
            <person name="Mohammed S."/>
        </authorList>
    </citation>
    <scope>IDENTIFICATION BY MASS SPECTROMETRY [LARGE SCALE ANALYSIS]</scope>
    <source>
        <tissue>Cervix carcinoma</tissue>
        <tissue>Erythroleukemia</tissue>
    </source>
</reference>
<reference key="21">
    <citation type="journal article" date="2014" name="J. Proteomics">
        <title>An enzyme assisted RP-RPLC approach for in-depth analysis of human liver phosphoproteome.</title>
        <authorList>
            <person name="Bian Y."/>
            <person name="Song C."/>
            <person name="Cheng K."/>
            <person name="Dong M."/>
            <person name="Wang F."/>
            <person name="Huang J."/>
            <person name="Sun D."/>
            <person name="Wang L."/>
            <person name="Ye M."/>
            <person name="Zou H."/>
        </authorList>
    </citation>
    <scope>IDENTIFICATION BY MASS SPECTROMETRY [LARGE SCALE ANALYSIS]</scope>
    <source>
        <tissue>Liver</tissue>
    </source>
</reference>
<reference key="22">
    <citation type="journal article" date="2014" name="J. Biol. Chem.">
        <title>Mycobacterium tuberculosis promotes anti-apoptotic activity of the macrophage by PtpA protein-dependent dephosphorylation of host GSK3alpha.</title>
        <authorList>
            <person name="Poirier V."/>
            <person name="Bach H."/>
            <person name="Av-Gay Y."/>
        </authorList>
    </citation>
    <scope>INTERACTION WITH MYCOBACTERIUM TUBERCULOSIS PTPA</scope>
    <scope>DEPHOSPHORYLATION (MICROBIAL INFECTION)</scope>
</reference>
<reference key="23">
    <citation type="journal article" date="2015" name="J. Biol. Chem.">
        <title>Rictor Undergoes Glycogen Synthase Kinase 3 (GSK3)-dependent, FBXW7-mediated Ubiquitination and Proteasomal Degradation.</title>
        <authorList>
            <person name="Koo J."/>
            <person name="Wu X."/>
            <person name="Mao Z."/>
            <person name="Khuri F.R."/>
            <person name="Sun S.Y."/>
        </authorList>
    </citation>
    <scope>FUNCTION</scope>
    <scope>CATALYTIC ACTIVITY</scope>
    <scope>INTERACTION WITH RICTOR</scope>
</reference>
<reference key="24">
    <citation type="journal article" date="2019" name="Mol. Cell">
        <title>Pacer is a mediator of mTORC1 and GSK3-TIP60 signaling in regulation of autophagosome maturation and lipid metabolism.</title>
        <authorList>
            <person name="Cheng X."/>
            <person name="Ma X."/>
            <person name="Zhu Q."/>
            <person name="Song D."/>
            <person name="Ding X."/>
            <person name="Li L."/>
            <person name="Jiang X."/>
            <person name="Wang X."/>
            <person name="Tian R."/>
            <person name="Su H."/>
            <person name="Shen Z."/>
            <person name="Chen S."/>
            <person name="Liu T."/>
            <person name="Gong W."/>
            <person name="Liu W."/>
            <person name="Sun Q."/>
        </authorList>
    </citation>
    <scope>FUNCTION</scope>
</reference>
<reference key="25">
    <citation type="journal article" date="2019" name="Science">
        <title>LMBR1L regulates lymphopoiesis through Wnt/beta-catenin signaling.</title>
        <authorList>
            <person name="Choi J.H."/>
            <person name="Zhong X."/>
            <person name="McAlpine W."/>
            <person name="Liao T.C."/>
            <person name="Zhang D."/>
            <person name="Fang B."/>
            <person name="Russell J."/>
            <person name="Ludwig S."/>
            <person name="Nair-Gill E."/>
            <person name="Zhang Z."/>
            <person name="Wang K.W."/>
            <person name="Misawa T."/>
            <person name="Zhan X."/>
            <person name="Choi M."/>
            <person name="Wang T."/>
            <person name="Li X."/>
            <person name="Tang M."/>
            <person name="Sun Q."/>
            <person name="Yu L."/>
            <person name="Murray A.R."/>
            <person name="Moresco E.M.Y."/>
            <person name="Beutler B."/>
        </authorList>
    </citation>
    <scope>INTERACTION WITH LMBR1L</scope>
</reference>
<reference key="26">
    <citation type="journal article" date="2007" name="Nature">
        <title>Patterns of somatic mutation in human cancer genomes.</title>
        <authorList>
            <person name="Greenman C."/>
            <person name="Stephens P."/>
            <person name="Smith R."/>
            <person name="Dalgliesh G.L."/>
            <person name="Hunter C."/>
            <person name="Bignell G."/>
            <person name="Davies H."/>
            <person name="Teague J."/>
            <person name="Butler A."/>
            <person name="Stevens C."/>
            <person name="Edkins S."/>
            <person name="O'Meara S."/>
            <person name="Vastrik I."/>
            <person name="Schmidt E.E."/>
            <person name="Avis T."/>
            <person name="Barthorpe S."/>
            <person name="Bhamra G."/>
            <person name="Buck G."/>
            <person name="Choudhury B."/>
            <person name="Clements J."/>
            <person name="Cole J."/>
            <person name="Dicks E."/>
            <person name="Forbes S."/>
            <person name="Gray K."/>
            <person name="Halliday K."/>
            <person name="Harrison R."/>
            <person name="Hills K."/>
            <person name="Hinton J."/>
            <person name="Jenkinson A."/>
            <person name="Jones D."/>
            <person name="Menzies A."/>
            <person name="Mironenko T."/>
            <person name="Perry J."/>
            <person name="Raine K."/>
            <person name="Richardson D."/>
            <person name="Shepherd R."/>
            <person name="Small A."/>
            <person name="Tofts C."/>
            <person name="Varian J."/>
            <person name="Webb T."/>
            <person name="West S."/>
            <person name="Widaa S."/>
            <person name="Yates A."/>
            <person name="Cahill D.P."/>
            <person name="Louis D.N."/>
            <person name="Goldstraw P."/>
            <person name="Nicholson A.G."/>
            <person name="Brasseur F."/>
            <person name="Looijenga L."/>
            <person name="Weber B.L."/>
            <person name="Chiew Y.-E."/>
            <person name="DeFazio A."/>
            <person name="Greaves M.F."/>
            <person name="Green A.R."/>
            <person name="Campbell P."/>
            <person name="Birney E."/>
            <person name="Easton D.F."/>
            <person name="Chenevix-Trench G."/>
            <person name="Tan M.-H."/>
            <person name="Khoo S.K."/>
            <person name="Teh B.T."/>
            <person name="Yuen S.T."/>
            <person name="Leung S.Y."/>
            <person name="Wooster R."/>
            <person name="Futreal P.A."/>
            <person name="Stratton M.R."/>
        </authorList>
    </citation>
    <scope>VARIANT [LARGE SCALE ANALYSIS] PHE-461</scope>
</reference>
<sequence>MSGGGPSGGGPGGSGRARTSSFAEPGGGGGGGGGGPGGSASGPGGTGGGKASVGAMGGGVGASSSGGGPGGSGGGGSGGPGAGTSFPPPGVKLGRDSGKVTTVVATLGQGPERSQEVAYTDIKVIGNGSFGVVYQARLAETRELVAIKKVLQDKRFKNRELQIMRKLDHCNIVRLRYFFYSSGEKKDELYLNLVLEYVPETVYRVARHFTKAKLTIPILYVKVYMYQLFRSLAYIHSQGVCHRDIKPQNLLVDPDTAVLKLCDFGSAKQLVRGEPNVSYICSRYYRAPELIFGATDYTSSIDVWSAGCVLAELLLGQPIFPGDSGVDQLVEIIKVLGTPTREQIREMNPNYTEFKFPQIKAHPWTKVFKSRTPPEAIALCSSLLEYTPSSRLSPLEACAHSFFDELRCLGTQLPNNRPLPPLFNFSAGELSIQPSLNAILIPPHLRSPAGTTTLTPSSQALTETPTSSDWQSTDATPTLTNSS</sequence>
<protein>
    <recommendedName>
        <fullName>Glycogen synthase kinase-3 alpha</fullName>
        <shortName>GSK-3 alpha</shortName>
        <ecNumber>2.7.11.26</ecNumber>
    </recommendedName>
    <alternativeName>
        <fullName>Serine/threonine-protein kinase GSK3A</fullName>
        <ecNumber evidence="15 17">2.7.11.1</ecNumber>
    </alternativeName>
</protein>
<feature type="initiator methionine" description="Removed" evidence="27 28">
    <location>
        <position position="1"/>
    </location>
</feature>
<feature type="chain" id="PRO_0000085978" description="Glycogen synthase kinase-3 alpha">
    <location>
        <begin position="2"/>
        <end position="483"/>
    </location>
</feature>
<feature type="domain" description="Protein kinase" evidence="4">
    <location>
        <begin position="119"/>
        <end position="403"/>
    </location>
</feature>
<feature type="region of interest" description="Disordered" evidence="6">
    <location>
        <begin position="1"/>
        <end position="96"/>
    </location>
</feature>
<feature type="region of interest" description="Disordered" evidence="6">
    <location>
        <begin position="449"/>
        <end position="483"/>
    </location>
</feature>
<feature type="compositionally biased region" description="Gly residues" evidence="6">
    <location>
        <begin position="1"/>
        <end position="15"/>
    </location>
</feature>
<feature type="compositionally biased region" description="Gly residues" evidence="6">
    <location>
        <begin position="25"/>
        <end position="82"/>
    </location>
</feature>
<feature type="active site" description="Proton acceptor" evidence="4 5">
    <location>
        <position position="244"/>
    </location>
</feature>
<feature type="binding site" evidence="4">
    <location>
        <begin position="125"/>
        <end position="133"/>
    </location>
    <ligand>
        <name>ATP</name>
        <dbReference type="ChEBI" id="CHEBI:30616"/>
    </ligand>
</feature>
<feature type="binding site" evidence="4">
    <location>
        <position position="148"/>
    </location>
    <ligand>
        <name>ATP</name>
        <dbReference type="ChEBI" id="CHEBI:30616"/>
    </ligand>
</feature>
<feature type="modified residue" description="N-acetylserine" evidence="27 28">
    <location>
        <position position="2"/>
    </location>
</feature>
<feature type="modified residue" description="Phosphoserine" evidence="26 27">
    <location>
        <position position="2"/>
    </location>
</feature>
<feature type="modified residue" description="Phosphoserine; by PKB/AKT1" evidence="3">
    <location>
        <position position="21"/>
    </location>
</feature>
<feature type="modified residue" description="Phosphoserine" evidence="26">
    <location>
        <position position="72"/>
    </location>
</feature>
<feature type="modified residue" description="Phosphoserine" evidence="27">
    <location>
        <position position="77"/>
    </location>
</feature>
<feature type="modified residue" description="Phosphoserine" evidence="27">
    <location>
        <position position="97"/>
    </location>
</feature>
<feature type="modified residue" description="Phosphotyrosine" evidence="1">
    <location>
        <position position="279"/>
    </location>
</feature>
<feature type="sequence variant" id="VAR_051625" description="In dbSNP:rs35978177.">
    <original>Q</original>
    <variation>E</variation>
    <location>
        <position position="109"/>
    </location>
</feature>
<feature type="sequence variant" id="VAR_040539" description="In dbSNP:rs35454502." evidence="11">
    <original>L</original>
    <variation>F</variation>
    <location>
        <position position="461"/>
    </location>
</feature>
<feature type="sequence conflict" description="In Ref. 1; AAA62432." evidence="22" ref="1">
    <original>A</original>
    <variation>S</variation>
    <location>
        <position position="449"/>
    </location>
</feature>
<feature type="strand" evidence="29">
    <location>
        <begin position="102"/>
        <end position="112"/>
    </location>
</feature>
<feature type="strand" evidence="29">
    <location>
        <begin position="114"/>
        <end position="118"/>
    </location>
</feature>
<feature type="strand" evidence="29">
    <location>
        <begin position="120"/>
        <end position="126"/>
    </location>
</feature>
<feature type="strand" evidence="29">
    <location>
        <begin position="132"/>
        <end position="137"/>
    </location>
</feature>
<feature type="strand" evidence="29">
    <location>
        <begin position="144"/>
        <end position="152"/>
    </location>
</feature>
<feature type="helix" evidence="29">
    <location>
        <begin position="159"/>
        <end position="166"/>
    </location>
</feature>
<feature type="strand" evidence="29">
    <location>
        <begin position="175"/>
        <end position="182"/>
    </location>
</feature>
<feature type="strand" evidence="29">
    <location>
        <begin position="189"/>
        <end position="196"/>
    </location>
</feature>
<feature type="strand" evidence="29">
    <location>
        <begin position="199"/>
        <end position="201"/>
    </location>
</feature>
<feature type="helix" evidence="29">
    <location>
        <begin position="202"/>
        <end position="211"/>
    </location>
</feature>
<feature type="helix" evidence="29">
    <location>
        <begin position="218"/>
        <end position="237"/>
    </location>
</feature>
<feature type="helix" evidence="29">
    <location>
        <begin position="247"/>
        <end position="249"/>
    </location>
</feature>
<feature type="strand" evidence="29">
    <location>
        <begin position="250"/>
        <end position="252"/>
    </location>
</feature>
<feature type="turn" evidence="29">
    <location>
        <begin position="254"/>
        <end position="256"/>
    </location>
</feature>
<feature type="strand" evidence="29">
    <location>
        <begin position="259"/>
        <end position="261"/>
    </location>
</feature>
<feature type="helix" evidence="29">
    <location>
        <begin position="264"/>
        <end position="266"/>
    </location>
</feature>
<feature type="helix" evidence="29">
    <location>
        <begin position="283"/>
        <end position="285"/>
    </location>
</feature>
<feature type="helix" evidence="29">
    <location>
        <begin position="288"/>
        <end position="291"/>
    </location>
</feature>
<feature type="helix" evidence="29">
    <location>
        <begin position="300"/>
        <end position="315"/>
    </location>
</feature>
<feature type="helix" evidence="29">
    <location>
        <begin position="325"/>
        <end position="336"/>
    </location>
</feature>
<feature type="helix" evidence="29">
    <location>
        <begin position="341"/>
        <end position="347"/>
    </location>
</feature>
<feature type="helix" evidence="29">
    <location>
        <begin position="349"/>
        <end position="351"/>
    </location>
</feature>
<feature type="helix" evidence="29">
    <location>
        <begin position="364"/>
        <end position="366"/>
    </location>
</feature>
<feature type="helix" evidence="29">
    <location>
        <begin position="374"/>
        <end position="383"/>
    </location>
</feature>
<feature type="helix" evidence="29">
    <location>
        <begin position="388"/>
        <end position="390"/>
    </location>
</feature>
<feature type="helix" evidence="29">
    <location>
        <begin position="394"/>
        <end position="398"/>
    </location>
</feature>
<feature type="helix" evidence="29">
    <location>
        <begin position="401"/>
        <end position="403"/>
    </location>
</feature>
<feature type="helix" evidence="29">
    <location>
        <begin position="404"/>
        <end position="407"/>
    </location>
</feature>
<feature type="turn" evidence="30">
    <location>
        <begin position="414"/>
        <end position="416"/>
    </location>
</feature>
<feature type="helix" evidence="29">
    <location>
        <begin position="429"/>
        <end position="431"/>
    </location>
</feature>
<feature type="helix" evidence="29">
    <location>
        <begin position="434"/>
        <end position="436"/>
    </location>
</feature>
<feature type="helix" evidence="29">
    <location>
        <begin position="437"/>
        <end position="440"/>
    </location>
</feature>
<keyword id="KW-0002">3D-structure</keyword>
<keyword id="KW-0007">Acetylation</keyword>
<keyword id="KW-0026">Alzheimer disease</keyword>
<keyword id="KW-0067">ATP-binding</keyword>
<keyword id="KW-0119">Carbohydrate metabolism</keyword>
<keyword id="KW-0219">Diabetes mellitus</keyword>
<keyword id="KW-0321">Glycogen metabolism</keyword>
<keyword id="KW-0418">Kinase</keyword>
<keyword id="KW-0524">Neurogenesis</keyword>
<keyword id="KW-0547">Nucleotide-binding</keyword>
<keyword id="KW-0597">Phosphoprotein</keyword>
<keyword id="KW-1267">Proteomics identification</keyword>
<keyword id="KW-1185">Reference proteome</keyword>
<keyword id="KW-0723">Serine/threonine-protein kinase</keyword>
<keyword id="KW-0734">Signal transduction inhibitor</keyword>
<keyword id="KW-0808">Transferase</keyword>
<keyword id="KW-0879">Wnt signaling pathway</keyword>
<gene>
    <name type="primary">GSK3A</name>
</gene>
<comment type="function">
    <text evidence="1 2 3 7 9 10 17 18 19 20 21">Constitutively active protein kinase that acts as a negative regulator in the hormonal control of glucose homeostasis, Wnt signaling and regulation of transcription factors and microtubules, by phosphorylating and inactivating glycogen synthase (GYS1 or GYS2), CTNNB1/beta-catenin, APC and AXIN1 (PubMed:11749387, PubMed:17478001, PubMed:19366350). Requires primed phosphorylation of the majority of its substrates (PubMed:11749387, PubMed:17478001, PubMed:19366350). Contributes to insulin regulation of glycogen synthesis by phosphorylating and inhibiting GYS1 activity and hence glycogen synthesis (PubMed:11749387, PubMed:17478001, PubMed:19366350). Regulates glycogen metabolism in liver, but not in muscle (By similarity). May also mediate the development of insulin resistance by regulating activation of transcription factors (PubMed:10868943, PubMed:17478001). In Wnt signaling, regulates the level and transcriptional activity of nuclear CTNNB1/beta-catenin (PubMed:17229088). Facilitates amyloid precursor protein (APP) processing and the generation of APP-derived amyloid plaques found in Alzheimer disease (PubMed:12761548). May be involved in the regulation of replication in pancreatic beta-cells (By similarity). Is necessary for the establishment of neuronal polarity and axon outgrowth (By similarity). Through phosphorylation of the anti-apoptotic protein MCL1, may control cell apoptosis in response to growth factors deprivation (By similarity). Acts as a regulator of autophagy by mediating phosphorylation of KAT5/TIP60 under starvation conditions which activates KAT5/TIP60 acetyltransferase activity and promotes acetylation of key autophagy regulators, such as ULK1 and RUBCNL/Pacer (PubMed:30704899). Negatively regulates extrinsic apoptotic signaling pathway via death domain receptors. Promotes the formation of an anti-apoptotic complex, made of DDX3X, BRIC2 and GSK3B, at death receptors, including TNFRSF10B. The anti-apoptotic function is most effective with weak apoptotic signals and can be overcome by stronger stimulation (By similarity). Phosphorylates mTORC2 complex component RICTOR at 'Thr-1695' which facilitates FBXW7-mediated ubiquitination and subsequent degradation of RICTOR (PubMed:25897075).</text>
</comment>
<comment type="catalytic activity">
    <reaction>
        <text>L-seryl-[tau protein] + ATP = O-phospho-L-seryl-[tau protein] + ADP + H(+)</text>
        <dbReference type="Rhea" id="RHEA:12801"/>
        <dbReference type="Rhea" id="RHEA-COMP:13701"/>
        <dbReference type="Rhea" id="RHEA-COMP:13702"/>
        <dbReference type="ChEBI" id="CHEBI:15378"/>
        <dbReference type="ChEBI" id="CHEBI:29999"/>
        <dbReference type="ChEBI" id="CHEBI:30616"/>
        <dbReference type="ChEBI" id="CHEBI:83421"/>
        <dbReference type="ChEBI" id="CHEBI:456216"/>
        <dbReference type="EC" id="2.7.11.26"/>
    </reaction>
</comment>
<comment type="catalytic activity">
    <reaction>
        <text>L-threonyl-[tau protein] + ATP = O-phospho-L-threonyl-[tau protein] + ADP + H(+)</text>
        <dbReference type="Rhea" id="RHEA:53904"/>
        <dbReference type="Rhea" id="RHEA-COMP:13703"/>
        <dbReference type="Rhea" id="RHEA-COMP:13704"/>
        <dbReference type="ChEBI" id="CHEBI:15378"/>
        <dbReference type="ChEBI" id="CHEBI:30013"/>
        <dbReference type="ChEBI" id="CHEBI:30616"/>
        <dbReference type="ChEBI" id="CHEBI:61977"/>
        <dbReference type="ChEBI" id="CHEBI:456216"/>
        <dbReference type="EC" id="2.7.11.26"/>
    </reaction>
</comment>
<comment type="catalytic activity">
    <reaction evidence="15">
        <text>L-seryl-[protein] + ATP = O-phospho-L-seryl-[protein] + ADP + H(+)</text>
        <dbReference type="Rhea" id="RHEA:17989"/>
        <dbReference type="Rhea" id="RHEA-COMP:9863"/>
        <dbReference type="Rhea" id="RHEA-COMP:11604"/>
        <dbReference type="ChEBI" id="CHEBI:15378"/>
        <dbReference type="ChEBI" id="CHEBI:29999"/>
        <dbReference type="ChEBI" id="CHEBI:30616"/>
        <dbReference type="ChEBI" id="CHEBI:83421"/>
        <dbReference type="ChEBI" id="CHEBI:456216"/>
        <dbReference type="EC" id="2.7.11.1"/>
    </reaction>
</comment>
<comment type="catalytic activity">
    <reaction evidence="17">
        <text>L-threonyl-[protein] + ATP = O-phospho-L-threonyl-[protein] + ADP + H(+)</text>
        <dbReference type="Rhea" id="RHEA:46608"/>
        <dbReference type="Rhea" id="RHEA-COMP:11060"/>
        <dbReference type="Rhea" id="RHEA-COMP:11605"/>
        <dbReference type="ChEBI" id="CHEBI:15378"/>
        <dbReference type="ChEBI" id="CHEBI:30013"/>
        <dbReference type="ChEBI" id="CHEBI:30616"/>
        <dbReference type="ChEBI" id="CHEBI:61977"/>
        <dbReference type="ChEBI" id="CHEBI:456216"/>
        <dbReference type="EC" id="2.7.11.1"/>
    </reaction>
</comment>
<comment type="activity regulation">
    <text evidence="8 13">Activated by phosphorylation at Tyr-279. In response to insulin, inhibited by phosphorylation at Ser-21 by PKB/AKT1; phosphorylation at this site causes a conformational change, preventing access of substrates to the active site. Inhibited by lithium.</text>
</comment>
<comment type="subunit">
    <text evidence="3 10 12 14 17 25">Monomer. Interacts with ARRB2 (By similarity). Interacts with AXIN1 and CTNNB1/beta-catenin (PubMed:17229088). Interacts with CTNND2 (PubMed:19706605). Interacts with LMBR1L (PubMed:31073040). Interacts with DDX3X (PubMed:18846110). Interacts with TNFRSF10B (PubMed:18846110). Interacts with RICTOR; the interaction results in phosphorylation of RICTOR at 'Thr-1695' by GSK3A which facilitates FBXW7-mediated ubiquitination and subsequent degradation of RICTOR (PubMed:25897075).</text>
</comment>
<comment type="subunit">
    <text evidence="16">(Microbial infection) Interacts with M.tuberculosis PtpA.</text>
</comment>
<comment type="interaction">
    <interactant intactId="EBI-1044067">
        <id>P49840</id>
    </interactant>
    <interactant intactId="EBI-2431589">
        <id>PRO_0000000093</id>
        <label>APP</label>
        <dbReference type="UniProtKB" id="P05067"/>
    </interactant>
    <organismsDiffer>false</organismsDiffer>
    <experiments>3</experiments>
</comment>
<comment type="interaction">
    <interactant intactId="EBI-1044067">
        <id>P49840</id>
    </interactant>
    <interactant intactId="EBI-710484">
        <id>O15169</id>
        <label>AXIN1</label>
    </interactant>
    <organismsDiffer>false</organismsDiffer>
    <experiments>6</experiments>
</comment>
<comment type="interaction">
    <interactant intactId="EBI-1044067">
        <id>P49840</id>
    </interactant>
    <interactant intactId="EBI-4400025">
        <id>Q9Y2T1</id>
        <label>AXIN2</label>
    </interactant>
    <organismsDiffer>false</organismsDiffer>
    <experiments>4</experiments>
</comment>
<comment type="interaction">
    <interactant intactId="EBI-1044067">
        <id>P49840</id>
    </interactant>
    <interactant intactId="EBI-718185">
        <id>O75398</id>
        <label>DEAF1</label>
    </interactant>
    <organismsDiffer>false</organismsDiffer>
    <experiments>3</experiments>
</comment>
<comment type="interaction">
    <interactant intactId="EBI-1044067">
        <id>P49840</id>
    </interactant>
    <interactant intactId="EBI-2506081">
        <id>Q6P3S6</id>
        <label>FBXO42</label>
    </interactant>
    <organismsDiffer>false</organismsDiffer>
    <experiments>3</experiments>
</comment>
<comment type="interaction">
    <interactant intactId="EBI-1044067">
        <id>P49840</id>
    </interactant>
    <interactant intactId="EBI-3934879">
        <id>Q92837</id>
        <label>FRAT1</label>
    </interactant>
    <organismsDiffer>false</organismsDiffer>
    <experiments>5</experiments>
</comment>
<comment type="interaction">
    <interactant intactId="EBI-1044067">
        <id>P49840</id>
    </interactant>
    <interactant intactId="EBI-1052580">
        <id>Q9P0R6</id>
        <label>GSKIP</label>
    </interactant>
    <organismsDiffer>false</organismsDiffer>
    <experiments>5</experiments>
</comment>
<comment type="interaction">
    <interactant intactId="EBI-1044067">
        <id>P49840</id>
    </interactant>
    <interactant intactId="EBI-352572">
        <id>P08238</id>
        <label>HSP90AB1</label>
    </interactant>
    <organismsDiffer>false</organismsDiffer>
    <experiments>3</experiments>
</comment>
<comment type="interaction">
    <interactant intactId="EBI-1044067">
        <id>P49840</id>
    </interactant>
    <interactant intactId="EBI-466029">
        <id>P42858</id>
        <label>HTT</label>
    </interactant>
    <organismsDiffer>false</organismsDiffer>
    <experiments>6</experiments>
</comment>
<comment type="interaction">
    <interactant intactId="EBI-1044067">
        <id>P49840</id>
    </interactant>
    <interactant intactId="EBI-910915">
        <id>O75581</id>
        <label>LRP6</label>
    </interactant>
    <organismsDiffer>false</organismsDiffer>
    <experiments>3</experiments>
</comment>
<comment type="interaction">
    <interactant intactId="EBI-1044067">
        <id>P49840</id>
    </interactant>
    <interactant intactId="EBI-366233">
        <id>P10636-8</id>
        <label>MAPT</label>
    </interactant>
    <organismsDiffer>false</organismsDiffer>
    <experiments>2</experiments>
</comment>
<comment type="interaction">
    <interactant intactId="EBI-1044067">
        <id>P49840</id>
    </interactant>
    <interactant intactId="EBI-742698">
        <id>Q14596</id>
        <label>NBR1</label>
    </interactant>
    <organismsDiffer>false</organismsDiffer>
    <experiments>7</experiments>
</comment>
<comment type="interaction">
    <interactant intactId="EBI-1044067">
        <id>P49840</id>
    </interactant>
    <interactant intactId="EBI-356498">
        <id>P62258</id>
        <label>YWHAE</label>
    </interactant>
    <organismsDiffer>false</organismsDiffer>
    <experiments>3</experiments>
</comment>
<comment type="interaction">
    <interactant intactId="EBI-1044067">
        <id>P49840</id>
    </interactant>
    <interactant intactId="EBI-524753">
        <id>Q8IUH5</id>
        <label>ZDHHC17</label>
    </interactant>
    <organismsDiffer>false</organismsDiffer>
    <experiments>3</experiments>
</comment>
<comment type="PTM">
    <text>Phosphorylated by AKT1 at Ser-21: upon insulin-mediated signaling, the activated PKB/AKT1 protein kinase phosphorylates and deactivates GSK3A, resulting in the dephosphorylation and activation of GYS1. Activated by phosphorylation at Tyr-279.</text>
</comment>
<comment type="PTM">
    <text evidence="16">(Microbial infection) Dephosphorylated at Tyr-279 by M.tuberculosis PtpA, which leads to prevention of apoptosis during early stages of microbial infection.</text>
</comment>
<comment type="miscellaneous">
    <text evidence="23 24">Higher expression and activity of GSK3A are found in the skeletal muscle (vastus lateralis) of patients with type 2 diabetes (PubMed:10868943). Several potent GSK3 (GSK3A and GSK3B) inhibitors have been identified and characterized in preclinical models for treatments of type 2 diabetes (PubMed:19366350).</text>
</comment>
<comment type="similarity">
    <text evidence="22">Belongs to the protein kinase superfamily. CMGC Ser/Thr protein kinase family. GSK-3 subfamily.</text>
</comment>
<organism>
    <name type="scientific">Homo sapiens</name>
    <name type="common">Human</name>
    <dbReference type="NCBI Taxonomy" id="9606"/>
    <lineage>
        <taxon>Eukaryota</taxon>
        <taxon>Metazoa</taxon>
        <taxon>Chordata</taxon>
        <taxon>Craniata</taxon>
        <taxon>Vertebrata</taxon>
        <taxon>Euteleostomi</taxon>
        <taxon>Mammalia</taxon>
        <taxon>Eutheria</taxon>
        <taxon>Euarchontoglires</taxon>
        <taxon>Primates</taxon>
        <taxon>Haplorrhini</taxon>
        <taxon>Catarrhini</taxon>
        <taxon>Hominidae</taxon>
        <taxon>Homo</taxon>
    </lineage>
</organism>
<evidence type="ECO:0000250" key="1">
    <source>
        <dbReference type="UniProtKB" id="P18265"/>
    </source>
</evidence>
<evidence type="ECO:0000250" key="2">
    <source>
        <dbReference type="UniProtKB" id="P49841"/>
    </source>
</evidence>
<evidence type="ECO:0000250" key="3">
    <source>
        <dbReference type="UniProtKB" id="Q2NL51"/>
    </source>
</evidence>
<evidence type="ECO:0000255" key="4">
    <source>
        <dbReference type="PROSITE-ProRule" id="PRU00159"/>
    </source>
</evidence>
<evidence type="ECO:0000255" key="5">
    <source>
        <dbReference type="PROSITE-ProRule" id="PRU10027"/>
    </source>
</evidence>
<evidence type="ECO:0000256" key="6">
    <source>
        <dbReference type="SAM" id="MobiDB-lite"/>
    </source>
</evidence>
<evidence type="ECO:0000269" key="7">
    <source>
    </source>
</evidence>
<evidence type="ECO:0000269" key="8">
    <source>
    </source>
</evidence>
<evidence type="ECO:0000269" key="9">
    <source>
    </source>
</evidence>
<evidence type="ECO:0000269" key="10">
    <source>
    </source>
</evidence>
<evidence type="ECO:0000269" key="11">
    <source>
    </source>
</evidence>
<evidence type="ECO:0000269" key="12">
    <source>
    </source>
</evidence>
<evidence type="ECO:0000269" key="13">
    <source>
    </source>
</evidence>
<evidence type="ECO:0000269" key="14">
    <source>
    </source>
</evidence>
<evidence type="ECO:0000269" key="15">
    <source>
    </source>
</evidence>
<evidence type="ECO:0000269" key="16">
    <source>
    </source>
</evidence>
<evidence type="ECO:0000269" key="17">
    <source>
    </source>
</evidence>
<evidence type="ECO:0000269" key="18">
    <source>
    </source>
</evidence>
<evidence type="ECO:0000303" key="19">
    <source>
    </source>
</evidence>
<evidence type="ECO:0000303" key="20">
    <source>
    </source>
</evidence>
<evidence type="ECO:0000303" key="21">
    <source>
    </source>
</evidence>
<evidence type="ECO:0000305" key="22"/>
<evidence type="ECO:0000305" key="23">
    <source>
    </source>
</evidence>
<evidence type="ECO:0000305" key="24">
    <source>
    </source>
</evidence>
<evidence type="ECO:0000305" key="25">
    <source>
    </source>
</evidence>
<evidence type="ECO:0007744" key="26">
    <source>
    </source>
</evidence>
<evidence type="ECO:0007744" key="27">
    <source>
    </source>
</evidence>
<evidence type="ECO:0007744" key="28">
    <source>
    </source>
</evidence>
<evidence type="ECO:0007829" key="29">
    <source>
        <dbReference type="PDB" id="7SXF"/>
    </source>
</evidence>
<evidence type="ECO:0007829" key="30">
    <source>
        <dbReference type="PDB" id="7SXG"/>
    </source>
</evidence>